<keyword id="KW-0150">Chloroplast</keyword>
<keyword id="KW-0934">Plastid</keyword>
<keyword id="KW-1185">Reference proteome</keyword>
<keyword id="KW-0704">Schiff base</keyword>
<keyword id="KW-0784">Thiamine biosynthesis</keyword>
<keyword id="KW-0808">Transferase</keyword>
<name>THIG_PHATC</name>
<proteinExistence type="inferred from homology"/>
<gene>
    <name evidence="1" type="primary">thiG</name>
</gene>
<accession>A0T0L1</accession>
<dbReference type="EC" id="2.8.1.10" evidence="1"/>
<dbReference type="EMBL" id="EF067920">
    <property type="protein sequence ID" value="ABK20709.1"/>
    <property type="molecule type" value="Genomic_DNA"/>
</dbReference>
<dbReference type="RefSeq" id="YP_874486.1">
    <property type="nucleotide sequence ID" value="NC_008588.1"/>
</dbReference>
<dbReference type="SMR" id="A0T0L1"/>
<dbReference type="STRING" id="556484.A0T0L1"/>
<dbReference type="GeneID" id="4524690"/>
<dbReference type="InParanoid" id="A0T0L1"/>
<dbReference type="UniPathway" id="UPA00060"/>
<dbReference type="Proteomes" id="UP000000759">
    <property type="component" value="Chloroplast"/>
</dbReference>
<dbReference type="GO" id="GO:0009507">
    <property type="term" value="C:chloroplast"/>
    <property type="evidence" value="ECO:0007669"/>
    <property type="project" value="UniProtKB-SubCell"/>
</dbReference>
<dbReference type="GO" id="GO:1990107">
    <property type="term" value="F:thiazole synthase activity"/>
    <property type="evidence" value="ECO:0007669"/>
    <property type="project" value="UniProtKB-EC"/>
</dbReference>
<dbReference type="GO" id="GO:0009229">
    <property type="term" value="P:thiamine diphosphate biosynthetic process"/>
    <property type="evidence" value="ECO:0007669"/>
    <property type="project" value="UniProtKB-UniRule"/>
</dbReference>
<dbReference type="CDD" id="cd04728">
    <property type="entry name" value="ThiG"/>
    <property type="match status" value="1"/>
</dbReference>
<dbReference type="Gene3D" id="3.20.20.70">
    <property type="entry name" value="Aldolase class I"/>
    <property type="match status" value="1"/>
</dbReference>
<dbReference type="HAMAP" id="MF_00443">
    <property type="entry name" value="ThiG"/>
    <property type="match status" value="1"/>
</dbReference>
<dbReference type="InterPro" id="IPR013785">
    <property type="entry name" value="Aldolase_TIM"/>
</dbReference>
<dbReference type="InterPro" id="IPR033983">
    <property type="entry name" value="Thiazole_synthase_ThiG"/>
</dbReference>
<dbReference type="InterPro" id="IPR008867">
    <property type="entry name" value="ThiG"/>
</dbReference>
<dbReference type="PANTHER" id="PTHR34266">
    <property type="entry name" value="THIAZOLE SYNTHASE"/>
    <property type="match status" value="1"/>
</dbReference>
<dbReference type="PANTHER" id="PTHR34266:SF2">
    <property type="entry name" value="THIAZOLE SYNTHASE"/>
    <property type="match status" value="1"/>
</dbReference>
<dbReference type="Pfam" id="PF05690">
    <property type="entry name" value="ThiG"/>
    <property type="match status" value="1"/>
</dbReference>
<dbReference type="SUPFAM" id="SSF110399">
    <property type="entry name" value="ThiG-like"/>
    <property type="match status" value="1"/>
</dbReference>
<geneLocation type="chloroplast"/>
<protein>
    <recommendedName>
        <fullName evidence="1">Thiazole synthase</fullName>
        <ecNumber evidence="1">2.8.1.10</ecNumber>
    </recommendedName>
</protein>
<feature type="chain" id="PRO_0000276566" description="Thiazole synthase">
    <location>
        <begin position="1"/>
        <end position="269"/>
    </location>
</feature>
<feature type="active site" description="Schiff-base intermediate with DXP" evidence="1">
    <location>
        <position position="109"/>
    </location>
</feature>
<feature type="binding site" evidence="1">
    <location>
        <position position="170"/>
    </location>
    <ligand>
        <name>1-deoxy-D-xylulose 5-phosphate</name>
        <dbReference type="ChEBI" id="CHEBI:57792"/>
    </ligand>
</feature>
<feature type="binding site" evidence="1">
    <location>
        <begin position="196"/>
        <end position="197"/>
    </location>
    <ligand>
        <name>1-deoxy-D-xylulose 5-phosphate</name>
        <dbReference type="ChEBI" id="CHEBI:57792"/>
    </ligand>
</feature>
<feature type="binding site" evidence="1">
    <location>
        <begin position="218"/>
        <end position="219"/>
    </location>
    <ligand>
        <name>1-deoxy-D-xylulose 5-phosphate</name>
        <dbReference type="ChEBI" id="CHEBI:57792"/>
    </ligand>
</feature>
<comment type="function">
    <text evidence="1">Catalyzes the rearrangement of 1-deoxy-D-xylulose 5-phosphate (DXP) to produce the thiazole phosphate moiety of thiamine. Sulfur is provided by the thiocarboxylate moiety of the carrier protein ThiS. In vitro, sulfur can be provided by H(2)S.</text>
</comment>
<comment type="catalytic activity">
    <reaction evidence="1">
        <text>[ThiS sulfur-carrier protein]-C-terminal-Gly-aminoethanethioate + 2-iminoacetate + 1-deoxy-D-xylulose 5-phosphate = [ThiS sulfur-carrier protein]-C-terminal Gly-Gly + 2-[(2R,5Z)-2-carboxy-4-methylthiazol-5(2H)-ylidene]ethyl phosphate + 2 H2O + H(+)</text>
        <dbReference type="Rhea" id="RHEA:26297"/>
        <dbReference type="Rhea" id="RHEA-COMP:12909"/>
        <dbReference type="Rhea" id="RHEA-COMP:19908"/>
        <dbReference type="ChEBI" id="CHEBI:15377"/>
        <dbReference type="ChEBI" id="CHEBI:15378"/>
        <dbReference type="ChEBI" id="CHEBI:57792"/>
        <dbReference type="ChEBI" id="CHEBI:62899"/>
        <dbReference type="ChEBI" id="CHEBI:77846"/>
        <dbReference type="ChEBI" id="CHEBI:90778"/>
        <dbReference type="ChEBI" id="CHEBI:232372"/>
        <dbReference type="EC" id="2.8.1.10"/>
    </reaction>
</comment>
<comment type="pathway">
    <text evidence="1">Cofactor biosynthesis; thiamine diphosphate biosynthesis.</text>
</comment>
<comment type="subunit">
    <text evidence="1">Homotetramer. Forms heterodimers with either ThiH or ThiS.</text>
</comment>
<comment type="subcellular location">
    <subcellularLocation>
        <location>Plastid</location>
        <location>Chloroplast</location>
    </subcellularLocation>
</comment>
<comment type="similarity">
    <text evidence="1">Belongs to the ThiG family.</text>
</comment>
<organism>
    <name type="scientific">Phaeodactylum tricornutum (strain CCAP 1055/1)</name>
    <dbReference type="NCBI Taxonomy" id="556484"/>
    <lineage>
        <taxon>Eukaryota</taxon>
        <taxon>Sar</taxon>
        <taxon>Stramenopiles</taxon>
        <taxon>Ochrophyta</taxon>
        <taxon>Bacillariophyta</taxon>
        <taxon>Bacillariophyceae</taxon>
        <taxon>Bacillariophycidae</taxon>
        <taxon>Naviculales</taxon>
        <taxon>Phaeodactylaceae</taxon>
        <taxon>Phaeodactylum</taxon>
    </lineage>
</organism>
<reference key="1">
    <citation type="journal article" date="2007" name="Mol. Genet. Genomics">
        <title>Chloroplast genomes of the diatoms Phaeodactylum tricornutum and Thalassiosira pseudonana: comparison with other plastid genomes of the red lineage.</title>
        <authorList>
            <person name="Oudot-Le Secq M.-P."/>
            <person name="Grimwood J."/>
            <person name="Shapiro H."/>
            <person name="Armbrust E.V."/>
            <person name="Bowler C."/>
            <person name="Green B.R."/>
        </authorList>
    </citation>
    <scope>NUCLEOTIDE SEQUENCE [LARGE SCALE GENOMIC DNA]</scope>
    <source>
        <strain>CCAP 1055/1</strain>
    </source>
</reference>
<sequence>MTNNLDKLKIGNKSFNSRLMLGTGKYRTTQSAIASIEDSNCDIVTVAIRRLPVNLKNDNINFLNKLDWNKLWLLPNTAGSQTAEEAIRMAFLGHELACQVGQEDNFFVKLEVISDPKYLLPDPIGTLKAAEFLIRKGFTVLPYINADPMLALHLEDLGCATVMPLASPIGSGQGLNNLANIKIIIENASVPVIIDAGIGTPSEATQAMELGADGVLLNTAVAQSKNPSQMASAMRLGVQAGRLAYLAGRMEKKYYADASSPLEQISKLI</sequence>
<evidence type="ECO:0000255" key="1">
    <source>
        <dbReference type="HAMAP-Rule" id="MF_00443"/>
    </source>
</evidence>